<proteinExistence type="inferred from homology"/>
<name>RL25_BURM7</name>
<dbReference type="EMBL" id="CP000548">
    <property type="protein sequence ID" value="ABO05531.1"/>
    <property type="molecule type" value="Genomic_DNA"/>
</dbReference>
<dbReference type="RefSeq" id="WP_004200150.1">
    <property type="nucleotide sequence ID" value="NZ_CP007802.1"/>
</dbReference>
<dbReference type="SMR" id="A3MQB4"/>
<dbReference type="KEGG" id="bmaz:BM44_417"/>
<dbReference type="KEGG" id="bmn:BMA10247_2929"/>
<dbReference type="PATRIC" id="fig|320389.8.peg.458"/>
<dbReference type="GO" id="GO:0022625">
    <property type="term" value="C:cytosolic large ribosomal subunit"/>
    <property type="evidence" value="ECO:0007669"/>
    <property type="project" value="TreeGrafter"/>
</dbReference>
<dbReference type="GO" id="GO:0008097">
    <property type="term" value="F:5S rRNA binding"/>
    <property type="evidence" value="ECO:0007669"/>
    <property type="project" value="InterPro"/>
</dbReference>
<dbReference type="GO" id="GO:0003735">
    <property type="term" value="F:structural constituent of ribosome"/>
    <property type="evidence" value="ECO:0007669"/>
    <property type="project" value="InterPro"/>
</dbReference>
<dbReference type="GO" id="GO:0006412">
    <property type="term" value="P:translation"/>
    <property type="evidence" value="ECO:0007669"/>
    <property type="project" value="UniProtKB-UniRule"/>
</dbReference>
<dbReference type="CDD" id="cd00495">
    <property type="entry name" value="Ribosomal_L25_TL5_CTC"/>
    <property type="match status" value="1"/>
</dbReference>
<dbReference type="Gene3D" id="2.170.120.20">
    <property type="entry name" value="Ribosomal protein L25, beta domain"/>
    <property type="match status" value="1"/>
</dbReference>
<dbReference type="Gene3D" id="2.40.240.10">
    <property type="entry name" value="Ribosomal Protein L25, Chain P"/>
    <property type="match status" value="1"/>
</dbReference>
<dbReference type="HAMAP" id="MF_01334">
    <property type="entry name" value="Ribosomal_bL25_CTC"/>
    <property type="match status" value="1"/>
</dbReference>
<dbReference type="InterPro" id="IPR020056">
    <property type="entry name" value="Rbsml_bL25/Gln-tRNA_synth_N"/>
</dbReference>
<dbReference type="InterPro" id="IPR011035">
    <property type="entry name" value="Ribosomal_bL25/Gln-tRNA_synth"/>
</dbReference>
<dbReference type="InterPro" id="IPR020057">
    <property type="entry name" value="Ribosomal_bL25_b-dom"/>
</dbReference>
<dbReference type="InterPro" id="IPR037121">
    <property type="entry name" value="Ribosomal_bL25_C"/>
</dbReference>
<dbReference type="InterPro" id="IPR001021">
    <property type="entry name" value="Ribosomal_bL25_long"/>
</dbReference>
<dbReference type="InterPro" id="IPR029751">
    <property type="entry name" value="Ribosomal_L25_dom"/>
</dbReference>
<dbReference type="InterPro" id="IPR020930">
    <property type="entry name" value="Ribosomal_uL5_bac-type"/>
</dbReference>
<dbReference type="NCBIfam" id="TIGR00731">
    <property type="entry name" value="bL25_bact_ctc"/>
    <property type="match status" value="1"/>
</dbReference>
<dbReference type="NCBIfam" id="NF004128">
    <property type="entry name" value="PRK05618.1-2"/>
    <property type="match status" value="1"/>
</dbReference>
<dbReference type="NCBIfam" id="NF004130">
    <property type="entry name" value="PRK05618.1-5"/>
    <property type="match status" value="1"/>
</dbReference>
<dbReference type="NCBIfam" id="NF004612">
    <property type="entry name" value="PRK05943.1"/>
    <property type="match status" value="1"/>
</dbReference>
<dbReference type="PANTHER" id="PTHR33284">
    <property type="entry name" value="RIBOSOMAL PROTEIN L25/GLN-TRNA SYNTHETASE, ANTI-CODON-BINDING DOMAIN-CONTAINING PROTEIN"/>
    <property type="match status" value="1"/>
</dbReference>
<dbReference type="PANTHER" id="PTHR33284:SF1">
    <property type="entry name" value="RIBOSOMAL PROTEIN L25_GLN-TRNA SYNTHETASE, ANTI-CODON-BINDING DOMAIN-CONTAINING PROTEIN"/>
    <property type="match status" value="1"/>
</dbReference>
<dbReference type="Pfam" id="PF01386">
    <property type="entry name" value="Ribosomal_L25p"/>
    <property type="match status" value="1"/>
</dbReference>
<dbReference type="Pfam" id="PF14693">
    <property type="entry name" value="Ribosomal_TL5_C"/>
    <property type="match status" value="1"/>
</dbReference>
<dbReference type="SUPFAM" id="SSF50715">
    <property type="entry name" value="Ribosomal protein L25-like"/>
    <property type="match status" value="1"/>
</dbReference>
<comment type="function">
    <text evidence="1">This is one of the proteins that binds to the 5S RNA in the ribosome where it forms part of the central protuberance.</text>
</comment>
<comment type="subunit">
    <text evidence="1">Part of the 50S ribosomal subunit; part of the 5S rRNA/L5/L18/L25 subcomplex. Contacts the 5S rRNA. Binds to the 5S rRNA independently of L5 and L18.</text>
</comment>
<comment type="similarity">
    <text evidence="1">Belongs to the bacterial ribosomal protein bL25 family. CTC subfamily.</text>
</comment>
<feature type="chain" id="PRO_1000052873" description="Large ribosomal subunit protein bL25">
    <location>
        <begin position="1"/>
        <end position="204"/>
    </location>
</feature>
<protein>
    <recommendedName>
        <fullName evidence="1">Large ribosomal subunit protein bL25</fullName>
    </recommendedName>
    <alternativeName>
        <fullName evidence="2">50S ribosomal protein L25</fullName>
    </alternativeName>
    <alternativeName>
        <fullName evidence="1">General stress protein CTC</fullName>
    </alternativeName>
</protein>
<gene>
    <name evidence="1" type="primary">rplY</name>
    <name evidence="1" type="synonym">ctc</name>
    <name type="ordered locus">BMA10247_2929</name>
</gene>
<sequence length="204" mass="21940">MKVVAFERQQQGTGASRRLRNAGKTTGIVYGGEAAPQMIELDHNALWHALKKEAFHSSILDLEVAGKSQRVLLRDVQYHPFRQLVLHVDFQRIDPKKKLHTKAPLHFLNAETSPAVKLSSAVVSHVVTEIEIECLPADLPEFLEVDLSKIEAGQSLHAKDIALPNGVALTAHVDAENPVIASATIPAGAVSDEAAAGEGETPAA</sequence>
<accession>A3MQB4</accession>
<evidence type="ECO:0000255" key="1">
    <source>
        <dbReference type="HAMAP-Rule" id="MF_01334"/>
    </source>
</evidence>
<evidence type="ECO:0000305" key="2"/>
<reference key="1">
    <citation type="journal article" date="2010" name="Genome Biol. Evol.">
        <title>Continuing evolution of Burkholderia mallei through genome reduction and large-scale rearrangements.</title>
        <authorList>
            <person name="Losada L."/>
            <person name="Ronning C.M."/>
            <person name="DeShazer D."/>
            <person name="Woods D."/>
            <person name="Fedorova N."/>
            <person name="Kim H.S."/>
            <person name="Shabalina S.A."/>
            <person name="Pearson T.R."/>
            <person name="Brinkac L."/>
            <person name="Tan P."/>
            <person name="Nandi T."/>
            <person name="Crabtree J."/>
            <person name="Badger J."/>
            <person name="Beckstrom-Sternberg S."/>
            <person name="Saqib M."/>
            <person name="Schutzer S.E."/>
            <person name="Keim P."/>
            <person name="Nierman W.C."/>
        </authorList>
    </citation>
    <scope>NUCLEOTIDE SEQUENCE [LARGE SCALE GENOMIC DNA]</scope>
    <source>
        <strain>NCTC 10247</strain>
    </source>
</reference>
<organism>
    <name type="scientific">Burkholderia mallei (strain NCTC 10247)</name>
    <dbReference type="NCBI Taxonomy" id="320389"/>
    <lineage>
        <taxon>Bacteria</taxon>
        <taxon>Pseudomonadati</taxon>
        <taxon>Pseudomonadota</taxon>
        <taxon>Betaproteobacteria</taxon>
        <taxon>Burkholderiales</taxon>
        <taxon>Burkholderiaceae</taxon>
        <taxon>Burkholderia</taxon>
        <taxon>pseudomallei group</taxon>
    </lineage>
</organism>
<keyword id="KW-0687">Ribonucleoprotein</keyword>
<keyword id="KW-0689">Ribosomal protein</keyword>
<keyword id="KW-0694">RNA-binding</keyword>
<keyword id="KW-0699">rRNA-binding</keyword>